<keyword id="KW-0067">ATP-binding</keyword>
<keyword id="KW-0460">Magnesium</keyword>
<keyword id="KW-0547">Nucleotide-binding</keyword>
<keyword id="KW-1185">Reference proteome</keyword>
<keyword id="KW-0808">Transferase</keyword>
<keyword id="KW-0819">tRNA processing</keyword>
<proteinExistence type="inferred from homology"/>
<feature type="chain" id="PRO_1000020657" description="tRNA dimethylallyltransferase">
    <location>
        <begin position="1"/>
        <end position="308"/>
    </location>
</feature>
<feature type="region of interest" description="Interaction with substrate tRNA" evidence="1">
    <location>
        <begin position="39"/>
        <end position="42"/>
    </location>
</feature>
<feature type="region of interest" description="Interaction with substrate tRNA" evidence="1">
    <location>
        <begin position="163"/>
        <end position="167"/>
    </location>
</feature>
<feature type="region of interest" description="Interaction with substrate tRNA" evidence="1">
    <location>
        <begin position="244"/>
        <end position="249"/>
    </location>
</feature>
<feature type="binding site" evidence="1">
    <location>
        <begin position="14"/>
        <end position="21"/>
    </location>
    <ligand>
        <name>ATP</name>
        <dbReference type="ChEBI" id="CHEBI:30616"/>
    </ligand>
</feature>
<feature type="binding site" evidence="1">
    <location>
        <begin position="16"/>
        <end position="21"/>
    </location>
    <ligand>
        <name>substrate</name>
    </ligand>
</feature>
<feature type="site" description="Interaction with substrate tRNA" evidence="1">
    <location>
        <position position="105"/>
    </location>
</feature>
<feature type="site" description="Interaction with substrate tRNA" evidence="1">
    <location>
        <position position="127"/>
    </location>
</feature>
<comment type="function">
    <text evidence="1">Catalyzes the transfer of a dimethylallyl group onto the adenine at position 37 in tRNAs that read codons beginning with uridine, leading to the formation of N6-(dimethylallyl)adenosine (i(6)A).</text>
</comment>
<comment type="catalytic activity">
    <reaction evidence="1">
        <text>adenosine(37) in tRNA + dimethylallyl diphosphate = N(6)-dimethylallyladenosine(37) in tRNA + diphosphate</text>
        <dbReference type="Rhea" id="RHEA:26482"/>
        <dbReference type="Rhea" id="RHEA-COMP:10162"/>
        <dbReference type="Rhea" id="RHEA-COMP:10375"/>
        <dbReference type="ChEBI" id="CHEBI:33019"/>
        <dbReference type="ChEBI" id="CHEBI:57623"/>
        <dbReference type="ChEBI" id="CHEBI:74411"/>
        <dbReference type="ChEBI" id="CHEBI:74415"/>
        <dbReference type="EC" id="2.5.1.75"/>
    </reaction>
</comment>
<comment type="cofactor">
    <cofactor evidence="1">
        <name>Mg(2+)</name>
        <dbReference type="ChEBI" id="CHEBI:18420"/>
    </cofactor>
</comment>
<comment type="subunit">
    <text evidence="1">Monomer.</text>
</comment>
<comment type="similarity">
    <text evidence="1">Belongs to the IPP transferase family.</text>
</comment>
<reference key="1">
    <citation type="submission" date="2007-03" db="EMBL/GenBank/DDBJ databases">
        <title>Complete sequence of Shewanella loihica PV-4.</title>
        <authorList>
            <consortium name="US DOE Joint Genome Institute"/>
            <person name="Copeland A."/>
            <person name="Lucas S."/>
            <person name="Lapidus A."/>
            <person name="Barry K."/>
            <person name="Detter J.C."/>
            <person name="Glavina del Rio T."/>
            <person name="Hammon N."/>
            <person name="Israni S."/>
            <person name="Dalin E."/>
            <person name="Tice H."/>
            <person name="Pitluck S."/>
            <person name="Chain P."/>
            <person name="Malfatti S."/>
            <person name="Shin M."/>
            <person name="Vergez L."/>
            <person name="Schmutz J."/>
            <person name="Larimer F."/>
            <person name="Land M."/>
            <person name="Hauser L."/>
            <person name="Kyrpides N."/>
            <person name="Mikhailova N."/>
            <person name="Romine M.F."/>
            <person name="Serres G."/>
            <person name="Fredrickson J."/>
            <person name="Tiedje J."/>
            <person name="Richardson P."/>
        </authorList>
    </citation>
    <scope>NUCLEOTIDE SEQUENCE [LARGE SCALE GENOMIC DNA]</scope>
    <source>
        <strain>ATCC BAA-1088 / PV-4</strain>
    </source>
</reference>
<organism>
    <name type="scientific">Shewanella loihica (strain ATCC BAA-1088 / PV-4)</name>
    <dbReference type="NCBI Taxonomy" id="323850"/>
    <lineage>
        <taxon>Bacteria</taxon>
        <taxon>Pseudomonadati</taxon>
        <taxon>Pseudomonadota</taxon>
        <taxon>Gammaproteobacteria</taxon>
        <taxon>Alteromonadales</taxon>
        <taxon>Shewanellaceae</taxon>
        <taxon>Shewanella</taxon>
    </lineage>
</organism>
<accession>A3QAD9</accession>
<gene>
    <name evidence="1" type="primary">miaA</name>
    <name type="ordered locus">Shew_0565</name>
</gene>
<sequence length="308" mass="34506">MNSESQPTIITLMGPTASGKTALAMALAEQHNCEIISVDSALIYRDMDIGSAKPTQEELSRAPHRLIDIRDPSESYSAADFRSDAIANIEAILAAGKTPLLVGGTMLYFKALLEGLSPLPSADEAIRAEIAKEVEAKGWQALHDELRQIDPVSADRIHPNDPQRLSRAIEVYRISGKSLTELTQVKAEALPYKVVQFGIAPKDRKVLHLAIAERFKLMLNQGFVEEVQRLKARADLHLDLPSMRCVGYRQVWQYLDGEYDYDTMVEKSIVATRQLAKRQLTWLRGWADLNWLESGDESNLARLLEHCR</sequence>
<evidence type="ECO:0000255" key="1">
    <source>
        <dbReference type="HAMAP-Rule" id="MF_00185"/>
    </source>
</evidence>
<protein>
    <recommendedName>
        <fullName evidence="1">tRNA dimethylallyltransferase</fullName>
        <ecNumber evidence="1">2.5.1.75</ecNumber>
    </recommendedName>
    <alternativeName>
        <fullName evidence="1">Dimethylallyl diphosphate:tRNA dimethylallyltransferase</fullName>
        <shortName evidence="1">DMAPP:tRNA dimethylallyltransferase</shortName>
        <shortName evidence="1">DMATase</shortName>
    </alternativeName>
    <alternativeName>
        <fullName evidence="1">Isopentenyl-diphosphate:tRNA isopentenyltransferase</fullName>
        <shortName evidence="1">IPP transferase</shortName>
        <shortName evidence="1">IPPT</shortName>
        <shortName evidence="1">IPTase</shortName>
    </alternativeName>
</protein>
<name>MIAA_SHELP</name>
<dbReference type="EC" id="2.5.1.75" evidence="1"/>
<dbReference type="EMBL" id="CP000606">
    <property type="protein sequence ID" value="ABO22437.1"/>
    <property type="molecule type" value="Genomic_DNA"/>
</dbReference>
<dbReference type="RefSeq" id="WP_011864371.1">
    <property type="nucleotide sequence ID" value="NC_009092.1"/>
</dbReference>
<dbReference type="SMR" id="A3QAD9"/>
<dbReference type="STRING" id="323850.Shew_0565"/>
<dbReference type="KEGG" id="slo:Shew_0565"/>
<dbReference type="eggNOG" id="COG0324">
    <property type="taxonomic scope" value="Bacteria"/>
</dbReference>
<dbReference type="HOGENOM" id="CLU_032616_0_0_6"/>
<dbReference type="OrthoDB" id="9776390at2"/>
<dbReference type="Proteomes" id="UP000001558">
    <property type="component" value="Chromosome"/>
</dbReference>
<dbReference type="GO" id="GO:0005524">
    <property type="term" value="F:ATP binding"/>
    <property type="evidence" value="ECO:0007669"/>
    <property type="project" value="UniProtKB-UniRule"/>
</dbReference>
<dbReference type="GO" id="GO:0052381">
    <property type="term" value="F:tRNA dimethylallyltransferase activity"/>
    <property type="evidence" value="ECO:0007669"/>
    <property type="project" value="UniProtKB-UniRule"/>
</dbReference>
<dbReference type="GO" id="GO:0006400">
    <property type="term" value="P:tRNA modification"/>
    <property type="evidence" value="ECO:0007669"/>
    <property type="project" value="TreeGrafter"/>
</dbReference>
<dbReference type="FunFam" id="1.10.20.140:FF:000001">
    <property type="entry name" value="tRNA dimethylallyltransferase"/>
    <property type="match status" value="1"/>
</dbReference>
<dbReference type="Gene3D" id="1.10.20.140">
    <property type="match status" value="1"/>
</dbReference>
<dbReference type="Gene3D" id="3.40.50.300">
    <property type="entry name" value="P-loop containing nucleotide triphosphate hydrolases"/>
    <property type="match status" value="1"/>
</dbReference>
<dbReference type="HAMAP" id="MF_00185">
    <property type="entry name" value="IPP_trans"/>
    <property type="match status" value="1"/>
</dbReference>
<dbReference type="InterPro" id="IPR039657">
    <property type="entry name" value="Dimethylallyltransferase"/>
</dbReference>
<dbReference type="InterPro" id="IPR018022">
    <property type="entry name" value="IPT"/>
</dbReference>
<dbReference type="InterPro" id="IPR027417">
    <property type="entry name" value="P-loop_NTPase"/>
</dbReference>
<dbReference type="NCBIfam" id="TIGR00174">
    <property type="entry name" value="miaA"/>
    <property type="match status" value="1"/>
</dbReference>
<dbReference type="PANTHER" id="PTHR11088">
    <property type="entry name" value="TRNA DIMETHYLALLYLTRANSFERASE"/>
    <property type="match status" value="1"/>
</dbReference>
<dbReference type="PANTHER" id="PTHR11088:SF60">
    <property type="entry name" value="TRNA DIMETHYLALLYLTRANSFERASE"/>
    <property type="match status" value="1"/>
</dbReference>
<dbReference type="Pfam" id="PF01715">
    <property type="entry name" value="IPPT"/>
    <property type="match status" value="1"/>
</dbReference>
<dbReference type="SUPFAM" id="SSF52540">
    <property type="entry name" value="P-loop containing nucleoside triphosphate hydrolases"/>
    <property type="match status" value="1"/>
</dbReference>